<accession>A1T064</accession>
<organism>
    <name type="scientific">Psychromonas ingrahamii (strain DSM 17664 / CCUG 51855 / 37)</name>
    <dbReference type="NCBI Taxonomy" id="357804"/>
    <lineage>
        <taxon>Bacteria</taxon>
        <taxon>Pseudomonadati</taxon>
        <taxon>Pseudomonadota</taxon>
        <taxon>Gammaproteobacteria</taxon>
        <taxon>Alteromonadales</taxon>
        <taxon>Psychromonadaceae</taxon>
        <taxon>Psychromonas</taxon>
    </lineage>
</organism>
<name>RPOC_PSYIN</name>
<dbReference type="EC" id="2.7.7.6" evidence="1"/>
<dbReference type="EMBL" id="CP000510">
    <property type="protein sequence ID" value="ABM05129.1"/>
    <property type="molecule type" value="Genomic_DNA"/>
</dbReference>
<dbReference type="RefSeq" id="WP_011771681.1">
    <property type="nucleotide sequence ID" value="NC_008709.1"/>
</dbReference>
<dbReference type="SMR" id="A1T064"/>
<dbReference type="STRING" id="357804.Ping_3445"/>
<dbReference type="KEGG" id="pin:Ping_3445"/>
<dbReference type="eggNOG" id="COG0086">
    <property type="taxonomic scope" value="Bacteria"/>
</dbReference>
<dbReference type="HOGENOM" id="CLU_000524_3_1_6"/>
<dbReference type="OrthoDB" id="9815296at2"/>
<dbReference type="Proteomes" id="UP000000639">
    <property type="component" value="Chromosome"/>
</dbReference>
<dbReference type="GO" id="GO:0000428">
    <property type="term" value="C:DNA-directed RNA polymerase complex"/>
    <property type="evidence" value="ECO:0007669"/>
    <property type="project" value="UniProtKB-KW"/>
</dbReference>
<dbReference type="GO" id="GO:0003677">
    <property type="term" value="F:DNA binding"/>
    <property type="evidence" value="ECO:0007669"/>
    <property type="project" value="UniProtKB-UniRule"/>
</dbReference>
<dbReference type="GO" id="GO:0003899">
    <property type="term" value="F:DNA-directed RNA polymerase activity"/>
    <property type="evidence" value="ECO:0007669"/>
    <property type="project" value="UniProtKB-UniRule"/>
</dbReference>
<dbReference type="GO" id="GO:0000287">
    <property type="term" value="F:magnesium ion binding"/>
    <property type="evidence" value="ECO:0007669"/>
    <property type="project" value="UniProtKB-UniRule"/>
</dbReference>
<dbReference type="GO" id="GO:0008270">
    <property type="term" value="F:zinc ion binding"/>
    <property type="evidence" value="ECO:0007669"/>
    <property type="project" value="UniProtKB-UniRule"/>
</dbReference>
<dbReference type="GO" id="GO:0006351">
    <property type="term" value="P:DNA-templated transcription"/>
    <property type="evidence" value="ECO:0007669"/>
    <property type="project" value="UniProtKB-UniRule"/>
</dbReference>
<dbReference type="CDD" id="cd02655">
    <property type="entry name" value="RNAP_beta'_C"/>
    <property type="match status" value="1"/>
</dbReference>
<dbReference type="CDD" id="cd01609">
    <property type="entry name" value="RNAP_beta'_N"/>
    <property type="match status" value="1"/>
</dbReference>
<dbReference type="FunFam" id="1.10.132.30:FF:000003">
    <property type="entry name" value="DNA-directed RNA polymerase subunit beta"/>
    <property type="match status" value="1"/>
</dbReference>
<dbReference type="FunFam" id="1.10.150.390:FF:000002">
    <property type="entry name" value="DNA-directed RNA polymerase subunit beta"/>
    <property type="match status" value="1"/>
</dbReference>
<dbReference type="FunFam" id="4.10.860.120:FF:000001">
    <property type="entry name" value="DNA-directed RNA polymerase subunit beta"/>
    <property type="match status" value="1"/>
</dbReference>
<dbReference type="Gene3D" id="1.10.132.30">
    <property type="match status" value="1"/>
</dbReference>
<dbReference type="Gene3D" id="1.10.150.390">
    <property type="match status" value="1"/>
</dbReference>
<dbReference type="Gene3D" id="1.10.1790.20">
    <property type="match status" value="1"/>
</dbReference>
<dbReference type="Gene3D" id="1.10.40.90">
    <property type="match status" value="1"/>
</dbReference>
<dbReference type="Gene3D" id="2.40.40.20">
    <property type="match status" value="1"/>
</dbReference>
<dbReference type="Gene3D" id="2.40.50.100">
    <property type="match status" value="3"/>
</dbReference>
<dbReference type="Gene3D" id="4.10.860.120">
    <property type="entry name" value="RNA polymerase II, clamp domain"/>
    <property type="match status" value="1"/>
</dbReference>
<dbReference type="Gene3D" id="1.10.274.100">
    <property type="entry name" value="RNA polymerase Rpb1, domain 3"/>
    <property type="match status" value="1"/>
</dbReference>
<dbReference type="HAMAP" id="MF_01322">
    <property type="entry name" value="RNApol_bact_RpoC"/>
    <property type="match status" value="1"/>
</dbReference>
<dbReference type="InterPro" id="IPR045867">
    <property type="entry name" value="DNA-dir_RpoC_beta_prime"/>
</dbReference>
<dbReference type="InterPro" id="IPR012754">
    <property type="entry name" value="DNA-dir_RpoC_beta_prime_bact"/>
</dbReference>
<dbReference type="InterPro" id="IPR000722">
    <property type="entry name" value="RNA_pol_asu"/>
</dbReference>
<dbReference type="InterPro" id="IPR006592">
    <property type="entry name" value="RNA_pol_N"/>
</dbReference>
<dbReference type="InterPro" id="IPR007080">
    <property type="entry name" value="RNA_pol_Rpb1_1"/>
</dbReference>
<dbReference type="InterPro" id="IPR007066">
    <property type="entry name" value="RNA_pol_Rpb1_3"/>
</dbReference>
<dbReference type="InterPro" id="IPR042102">
    <property type="entry name" value="RNA_pol_Rpb1_3_sf"/>
</dbReference>
<dbReference type="InterPro" id="IPR007083">
    <property type="entry name" value="RNA_pol_Rpb1_4"/>
</dbReference>
<dbReference type="InterPro" id="IPR007081">
    <property type="entry name" value="RNA_pol_Rpb1_5"/>
</dbReference>
<dbReference type="InterPro" id="IPR044893">
    <property type="entry name" value="RNA_pol_Rpb1_clamp_domain"/>
</dbReference>
<dbReference type="InterPro" id="IPR038120">
    <property type="entry name" value="Rpb1_funnel_sf"/>
</dbReference>
<dbReference type="NCBIfam" id="TIGR02386">
    <property type="entry name" value="rpoC_TIGR"/>
    <property type="match status" value="1"/>
</dbReference>
<dbReference type="PANTHER" id="PTHR19376">
    <property type="entry name" value="DNA-DIRECTED RNA POLYMERASE"/>
    <property type="match status" value="1"/>
</dbReference>
<dbReference type="PANTHER" id="PTHR19376:SF54">
    <property type="entry name" value="DNA-DIRECTED RNA POLYMERASE SUBUNIT BETA"/>
    <property type="match status" value="1"/>
</dbReference>
<dbReference type="Pfam" id="PF04997">
    <property type="entry name" value="RNA_pol_Rpb1_1"/>
    <property type="match status" value="1"/>
</dbReference>
<dbReference type="Pfam" id="PF00623">
    <property type="entry name" value="RNA_pol_Rpb1_2"/>
    <property type="match status" value="2"/>
</dbReference>
<dbReference type="Pfam" id="PF04983">
    <property type="entry name" value="RNA_pol_Rpb1_3"/>
    <property type="match status" value="1"/>
</dbReference>
<dbReference type="Pfam" id="PF05000">
    <property type="entry name" value="RNA_pol_Rpb1_4"/>
    <property type="match status" value="1"/>
</dbReference>
<dbReference type="Pfam" id="PF04998">
    <property type="entry name" value="RNA_pol_Rpb1_5"/>
    <property type="match status" value="1"/>
</dbReference>
<dbReference type="SMART" id="SM00663">
    <property type="entry name" value="RPOLA_N"/>
    <property type="match status" value="1"/>
</dbReference>
<dbReference type="SUPFAM" id="SSF64484">
    <property type="entry name" value="beta and beta-prime subunits of DNA dependent RNA-polymerase"/>
    <property type="match status" value="1"/>
</dbReference>
<feature type="chain" id="PRO_0000353412" description="DNA-directed RNA polymerase subunit beta'">
    <location>
        <begin position="1"/>
        <end position="1406"/>
    </location>
</feature>
<feature type="binding site" evidence="1">
    <location>
        <position position="70"/>
    </location>
    <ligand>
        <name>Zn(2+)</name>
        <dbReference type="ChEBI" id="CHEBI:29105"/>
        <label>1</label>
    </ligand>
</feature>
<feature type="binding site" evidence="1">
    <location>
        <position position="72"/>
    </location>
    <ligand>
        <name>Zn(2+)</name>
        <dbReference type="ChEBI" id="CHEBI:29105"/>
        <label>1</label>
    </ligand>
</feature>
<feature type="binding site" evidence="1">
    <location>
        <position position="85"/>
    </location>
    <ligand>
        <name>Zn(2+)</name>
        <dbReference type="ChEBI" id="CHEBI:29105"/>
        <label>1</label>
    </ligand>
</feature>
<feature type="binding site" evidence="1">
    <location>
        <position position="88"/>
    </location>
    <ligand>
        <name>Zn(2+)</name>
        <dbReference type="ChEBI" id="CHEBI:29105"/>
        <label>1</label>
    </ligand>
</feature>
<feature type="binding site" evidence="1">
    <location>
        <position position="460"/>
    </location>
    <ligand>
        <name>Mg(2+)</name>
        <dbReference type="ChEBI" id="CHEBI:18420"/>
    </ligand>
</feature>
<feature type="binding site" evidence="1">
    <location>
        <position position="462"/>
    </location>
    <ligand>
        <name>Mg(2+)</name>
        <dbReference type="ChEBI" id="CHEBI:18420"/>
    </ligand>
</feature>
<feature type="binding site" evidence="1">
    <location>
        <position position="464"/>
    </location>
    <ligand>
        <name>Mg(2+)</name>
        <dbReference type="ChEBI" id="CHEBI:18420"/>
    </ligand>
</feature>
<feature type="binding site" evidence="1">
    <location>
        <position position="814"/>
    </location>
    <ligand>
        <name>Zn(2+)</name>
        <dbReference type="ChEBI" id="CHEBI:29105"/>
        <label>2</label>
    </ligand>
</feature>
<feature type="binding site" evidence="1">
    <location>
        <position position="889"/>
    </location>
    <ligand>
        <name>Zn(2+)</name>
        <dbReference type="ChEBI" id="CHEBI:29105"/>
        <label>2</label>
    </ligand>
</feature>
<feature type="binding site" evidence="1">
    <location>
        <position position="896"/>
    </location>
    <ligand>
        <name>Zn(2+)</name>
        <dbReference type="ChEBI" id="CHEBI:29105"/>
        <label>2</label>
    </ligand>
</feature>
<feature type="binding site" evidence="1">
    <location>
        <position position="899"/>
    </location>
    <ligand>
        <name>Zn(2+)</name>
        <dbReference type="ChEBI" id="CHEBI:29105"/>
        <label>2</label>
    </ligand>
</feature>
<protein>
    <recommendedName>
        <fullName evidence="1">DNA-directed RNA polymerase subunit beta'</fullName>
        <shortName evidence="1">RNAP subunit beta'</shortName>
        <ecNumber evidence="1">2.7.7.6</ecNumber>
    </recommendedName>
    <alternativeName>
        <fullName evidence="1">RNA polymerase subunit beta'</fullName>
    </alternativeName>
    <alternativeName>
        <fullName evidence="1">Transcriptase subunit beta'</fullName>
    </alternativeName>
</protein>
<evidence type="ECO:0000255" key="1">
    <source>
        <dbReference type="HAMAP-Rule" id="MF_01322"/>
    </source>
</evidence>
<reference key="1">
    <citation type="journal article" date="2008" name="BMC Genomics">
        <title>Genomics of an extreme psychrophile, Psychromonas ingrahamii.</title>
        <authorList>
            <person name="Riley M."/>
            <person name="Staley J.T."/>
            <person name="Danchin A."/>
            <person name="Wang T.Z."/>
            <person name="Brettin T.S."/>
            <person name="Hauser L.J."/>
            <person name="Land M.L."/>
            <person name="Thompson L.S."/>
        </authorList>
    </citation>
    <scope>NUCLEOTIDE SEQUENCE [LARGE SCALE GENOMIC DNA]</scope>
    <source>
        <strain>DSM 17664 / CCUG 51855 / 37</strain>
    </source>
</reference>
<sequence length="1406" mass="155104">MKDLLKFLKQQNKTKEFDGIKIGLASPEMVRSWSFGEVKKPETINYRTFKPEREGLFCARIFGPIKDYECLCGKYKRLKHRGVICEKCGVEVTQSKVRRDRMGHIELASPVAHIWFLKSLPSRIGLMLDMTLRDIERILYFESFVVVEPGMTDLERRQILLEEEYLDMLEQWGDEFEAVMGAEAIFSLLKQLDLDHEIAEMREELGTTNSETKRKKLTKRLKLVESFHQSSNKPEWMILTVLPVLPPDLRPLVPLDGGRFATSDLNDLYRRVINRNNRLKRLLDLAAPDIIVRNEKRMLQESVDALLDNGRRGRAITGSNKRPLKSLADMIKGKQGRFRQNLLGKRVDYSGRSVITVGPTLRLHQCGLPKKMALELFKPFVYGKLEALGLATTIKAAKKLVDREGGEVWDILEGVIREHPVLLNRAPTLHRLGIQAFEPVLIEGKAIQLHPLVCAAYNADFDGDQMAVHVPLTIEAQLEARTLMMSTNNILSPANGEPIIVPSQDVVLGLYYMTRSKINSLGEDMWFQSAKEAEKAYRAGAVGLQAIVKVRMKQVHIADDKSRTETTNIIETTVGRAILSLIMPEGLPFELVDLPMGKKQISTALNACYRLLGIKHTVIFADQLMYTGFEYATLSGASVCIDDMVIPTTKKTLVEAAEAEVQEIHEQFQAGLVTAGERYNKVIDIWASANEQVAKAMMENLSKDTVVNSKGEEVQQDSFNSVYMMADSGARGSAAQIRQLAGMRGLMAKPDGSIIETPITANFREGLNVLQYFISTHGARKGLADTALKTANSGYLTRRLVDIAQDLVITEKDCGSEDGLLVTPLIQGGDVVEALRERVLGRVVAQDIIKPGTKGEVLIARNVLLDEKLCDLIEEASVDQVWVRSVITCQTDFGACAQCYGRDLARGHMVGQGEAIGVMAAQSIGEPGTQLTMRTFHIGGAASRAASENNIQVKNTGKIKLHNAKFVINSEQKVVVTSRSTELTIIDKLGRTKENHRLPYGAVLEKQDGAEITSGEIIANWDPHTHPIITEVEGTVQFLDFIEGLSITKQADEFTGLSSTVIIDPAQRPNAGKELRPMVKLVDPQGNDLFIPGTDVAAQYALAANAIVSLEDGAKVRVGDAVARIPQESSKTRDITGGLPRVADLFEARTPKDAAILAEVSGTLAFGKETKGKRRLVITQANGEAYEEMVPKWRHLNIFEGEKIEKGEVISDGPESPHDILRLRGISPVANYITNEVQEVYRLQGVKINDKHIEVIVNQMLRKGTITDNGDSAFLVGEQAEVARVVIENRRLVAEGKAIATFDYQLLGITKASLATESFISAASFQETTRVLTEAAVAGKCDQLHGLKENVIVGRLIPAGTGFAHHRARAAAKAAELAPKVEETIVDTGTAEQNLADLLNAVDFGD</sequence>
<keyword id="KW-0240">DNA-directed RNA polymerase</keyword>
<keyword id="KW-0460">Magnesium</keyword>
<keyword id="KW-0479">Metal-binding</keyword>
<keyword id="KW-0548">Nucleotidyltransferase</keyword>
<keyword id="KW-1185">Reference proteome</keyword>
<keyword id="KW-0804">Transcription</keyword>
<keyword id="KW-0808">Transferase</keyword>
<keyword id="KW-0862">Zinc</keyword>
<gene>
    <name evidence="1" type="primary">rpoC</name>
    <name type="ordered locus">Ping_3445</name>
</gene>
<comment type="function">
    <text evidence="1">DNA-dependent RNA polymerase catalyzes the transcription of DNA into RNA using the four ribonucleoside triphosphates as substrates.</text>
</comment>
<comment type="catalytic activity">
    <reaction evidence="1">
        <text>RNA(n) + a ribonucleoside 5'-triphosphate = RNA(n+1) + diphosphate</text>
        <dbReference type="Rhea" id="RHEA:21248"/>
        <dbReference type="Rhea" id="RHEA-COMP:14527"/>
        <dbReference type="Rhea" id="RHEA-COMP:17342"/>
        <dbReference type="ChEBI" id="CHEBI:33019"/>
        <dbReference type="ChEBI" id="CHEBI:61557"/>
        <dbReference type="ChEBI" id="CHEBI:140395"/>
        <dbReference type="EC" id="2.7.7.6"/>
    </reaction>
</comment>
<comment type="cofactor">
    <cofactor evidence="1">
        <name>Mg(2+)</name>
        <dbReference type="ChEBI" id="CHEBI:18420"/>
    </cofactor>
    <text evidence="1">Binds 1 Mg(2+) ion per subunit.</text>
</comment>
<comment type="cofactor">
    <cofactor evidence="1">
        <name>Zn(2+)</name>
        <dbReference type="ChEBI" id="CHEBI:29105"/>
    </cofactor>
    <text evidence="1">Binds 2 Zn(2+) ions per subunit.</text>
</comment>
<comment type="subunit">
    <text evidence="1">The RNAP catalytic core consists of 2 alpha, 1 beta, 1 beta' and 1 omega subunit. When a sigma factor is associated with the core the holoenzyme is formed, which can initiate transcription.</text>
</comment>
<comment type="similarity">
    <text evidence="1">Belongs to the RNA polymerase beta' chain family.</text>
</comment>
<proteinExistence type="inferred from homology"/>